<evidence type="ECO:0000255" key="1">
    <source>
        <dbReference type="PROSITE-ProRule" id="PRU00159"/>
    </source>
</evidence>
<evidence type="ECO:0000255" key="2">
    <source>
        <dbReference type="PROSITE-ProRule" id="PRU10027"/>
    </source>
</evidence>
<evidence type="ECO:0000256" key="3">
    <source>
        <dbReference type="SAM" id="MobiDB-lite"/>
    </source>
</evidence>
<evidence type="ECO:0000269" key="4">
    <source>
    </source>
</evidence>
<evidence type="ECO:0000305" key="5"/>
<proteinExistence type="evidence at transcript level"/>
<organism>
    <name type="scientific">Mus musculus</name>
    <name type="common">Mouse</name>
    <dbReference type="NCBI Taxonomy" id="10090"/>
    <lineage>
        <taxon>Eukaryota</taxon>
        <taxon>Metazoa</taxon>
        <taxon>Chordata</taxon>
        <taxon>Craniata</taxon>
        <taxon>Vertebrata</taxon>
        <taxon>Euteleostomi</taxon>
        <taxon>Mammalia</taxon>
        <taxon>Eutheria</taxon>
        <taxon>Euarchontoglires</taxon>
        <taxon>Glires</taxon>
        <taxon>Rodentia</taxon>
        <taxon>Myomorpha</taxon>
        <taxon>Muroidea</taxon>
        <taxon>Muridae</taxon>
        <taxon>Murinae</taxon>
        <taxon>Mus</taxon>
        <taxon>Mus</taxon>
    </lineage>
</organism>
<name>SMK2A_MOUSE</name>
<gene>
    <name type="primary">Smok2a</name>
</gene>
<sequence>MGSGSQQKSEKLRSKPPFSEMENFHAQYEMLGTIGHGGSTKVKLARHRLTGTHVAVKMIPKREYWCKPLMSEAELLMMADHPNIISLLQVIETKKKVYLIMELCEGKSLYQHIRNAGYLQEDEARALFKQLLSAINYCRNQGIVHRDLKPDNIMVEKDGRVKIIDFGLGIQVKPGQKLNLFCGTYPFSAPEVLLSRPYDGPKIDVWTLGVVLYFMVTGKIPFDAASIEKLRKQIVAGKYSVPCRLSVKLHHLITLLMTDNPELRPTVAEVMMHPWVTKGSGVFPDPCEEQIPLKPDPAIVKAMGHIGFQAQDIEDSLRQRKFNETMASYCLLKKQLLKECDRPIRAQPMNPSVTPFPSLVDTPTFHLGLRRRETEPTSLRLSANRQMSVCGRSTSKKRDRSFSWPGVLSRPINITPTMDQTHTCTRSVPCINSNFCIIHPNSSDESTEGHTSASAEDKPVRSRGWPRGIKGWTSKIGNAMRKLCCCIPSNETSHLGQRRVSPKK</sequence>
<dbReference type="EC" id="2.7.11.1"/>
<dbReference type="EMBL" id="AJ245453">
    <property type="protein sequence ID" value="CAB61341.1"/>
    <property type="molecule type" value="mRNA"/>
</dbReference>
<dbReference type="CCDS" id="CCDS49951.1"/>
<dbReference type="SMR" id="Q9QYZ6"/>
<dbReference type="FunCoup" id="Q9QYZ6">
    <property type="interactions" value="132"/>
</dbReference>
<dbReference type="STRING" id="10090.ENSMUSP00000094432"/>
<dbReference type="iPTMnet" id="Q9QYZ6"/>
<dbReference type="PhosphoSitePlus" id="Q9QYZ6"/>
<dbReference type="PaxDb" id="10090-ENSMUSP00000094432"/>
<dbReference type="ProteomicsDB" id="261440"/>
<dbReference type="AGR" id="MGI:1351487"/>
<dbReference type="MGI" id="MGI:1351487">
    <property type="gene designation" value="Smok2a"/>
</dbReference>
<dbReference type="eggNOG" id="KOG0586">
    <property type="taxonomic scope" value="Eukaryota"/>
</dbReference>
<dbReference type="InParanoid" id="Q9QYZ6"/>
<dbReference type="PhylomeDB" id="Q9QYZ6"/>
<dbReference type="ChiTaRS" id="Smok2a">
    <property type="organism name" value="mouse"/>
</dbReference>
<dbReference type="PRO" id="PR:Q9QYZ6"/>
<dbReference type="Proteomes" id="UP000000589">
    <property type="component" value="Unplaced"/>
</dbReference>
<dbReference type="RNAct" id="Q9QYZ6">
    <property type="molecule type" value="protein"/>
</dbReference>
<dbReference type="GO" id="GO:0005524">
    <property type="term" value="F:ATP binding"/>
    <property type="evidence" value="ECO:0007669"/>
    <property type="project" value="UniProtKB-KW"/>
</dbReference>
<dbReference type="GO" id="GO:0106310">
    <property type="term" value="F:protein serine kinase activity"/>
    <property type="evidence" value="ECO:0007669"/>
    <property type="project" value="RHEA"/>
</dbReference>
<dbReference type="GO" id="GO:0004674">
    <property type="term" value="F:protein serine/threonine kinase activity"/>
    <property type="evidence" value="ECO:0007669"/>
    <property type="project" value="UniProtKB-KW"/>
</dbReference>
<dbReference type="CDD" id="cd14003">
    <property type="entry name" value="STKc_AMPK-like"/>
    <property type="match status" value="1"/>
</dbReference>
<dbReference type="CDD" id="cd14337">
    <property type="entry name" value="UBA_MARK_Par1"/>
    <property type="match status" value="1"/>
</dbReference>
<dbReference type="FunFam" id="1.10.510.10:FF:000592">
    <property type="entry name" value="CAMK family protein kinase"/>
    <property type="match status" value="1"/>
</dbReference>
<dbReference type="FunFam" id="1.10.8.10:FF:000005">
    <property type="entry name" value="Non-specific serine/threonine protein kinase"/>
    <property type="match status" value="1"/>
</dbReference>
<dbReference type="FunFam" id="3.30.200.20:FF:000003">
    <property type="entry name" value="Non-specific serine/threonine protein kinase"/>
    <property type="match status" value="1"/>
</dbReference>
<dbReference type="Gene3D" id="1.10.510.10">
    <property type="entry name" value="Transferase(Phosphotransferase) domain 1"/>
    <property type="match status" value="1"/>
</dbReference>
<dbReference type="InterPro" id="IPR011009">
    <property type="entry name" value="Kinase-like_dom_sf"/>
</dbReference>
<dbReference type="InterPro" id="IPR000719">
    <property type="entry name" value="Prot_kinase_dom"/>
</dbReference>
<dbReference type="InterPro" id="IPR008271">
    <property type="entry name" value="Ser/Thr_kinase_AS"/>
</dbReference>
<dbReference type="PANTHER" id="PTHR24346">
    <property type="entry name" value="MAP/MICROTUBULE AFFINITY-REGULATING KINASE"/>
    <property type="match status" value="1"/>
</dbReference>
<dbReference type="PANTHER" id="PTHR24346:SF95">
    <property type="entry name" value="SPERM MOTILITY KINASE 3A"/>
    <property type="match status" value="1"/>
</dbReference>
<dbReference type="Pfam" id="PF00069">
    <property type="entry name" value="Pkinase"/>
    <property type="match status" value="1"/>
</dbReference>
<dbReference type="SMART" id="SM00220">
    <property type="entry name" value="S_TKc"/>
    <property type="match status" value="1"/>
</dbReference>
<dbReference type="SUPFAM" id="SSF56112">
    <property type="entry name" value="Protein kinase-like (PK-like)"/>
    <property type="match status" value="1"/>
</dbReference>
<dbReference type="PROSITE" id="PS50011">
    <property type="entry name" value="PROTEIN_KINASE_DOM"/>
    <property type="match status" value="1"/>
</dbReference>
<dbReference type="PROSITE" id="PS00108">
    <property type="entry name" value="PROTEIN_KINASE_ST"/>
    <property type="match status" value="1"/>
</dbReference>
<accession>Q9QYZ6</accession>
<comment type="function">
    <text evidence="4">May play a role in sperm motility, especially in the regulation of flagellar function.</text>
</comment>
<comment type="catalytic activity">
    <reaction>
        <text>L-seryl-[protein] + ATP = O-phospho-L-seryl-[protein] + ADP + H(+)</text>
        <dbReference type="Rhea" id="RHEA:17989"/>
        <dbReference type="Rhea" id="RHEA-COMP:9863"/>
        <dbReference type="Rhea" id="RHEA-COMP:11604"/>
        <dbReference type="ChEBI" id="CHEBI:15378"/>
        <dbReference type="ChEBI" id="CHEBI:29999"/>
        <dbReference type="ChEBI" id="CHEBI:30616"/>
        <dbReference type="ChEBI" id="CHEBI:83421"/>
        <dbReference type="ChEBI" id="CHEBI:456216"/>
        <dbReference type="EC" id="2.7.11.1"/>
    </reaction>
</comment>
<comment type="catalytic activity">
    <reaction>
        <text>L-threonyl-[protein] + ATP = O-phospho-L-threonyl-[protein] + ADP + H(+)</text>
        <dbReference type="Rhea" id="RHEA:46608"/>
        <dbReference type="Rhea" id="RHEA-COMP:11060"/>
        <dbReference type="Rhea" id="RHEA-COMP:11605"/>
        <dbReference type="ChEBI" id="CHEBI:15378"/>
        <dbReference type="ChEBI" id="CHEBI:30013"/>
        <dbReference type="ChEBI" id="CHEBI:30616"/>
        <dbReference type="ChEBI" id="CHEBI:61977"/>
        <dbReference type="ChEBI" id="CHEBI:456216"/>
        <dbReference type="EC" id="2.7.11.1"/>
    </reaction>
</comment>
<comment type="tissue specificity">
    <text evidence="4">Testis-specific. Expressed in the testis from 22 days postpartum (22 dpp).</text>
</comment>
<comment type="miscellaneous">
    <text>Encoded on the T-complex, a region of 20-30 Mb on proximal third of mouse chromosome 17. Naturally occurring variant forms of the T-complex, known as complete t-haplotypes, are found in wild mouse populations. The t-haplotypes contain at least four nonoverlapping inversions that suppress recombination with the wild-type chromosome, and lock into strong linkage disequilibrium loci affecting normal transmission of the chromosome, male gametogenesis and embryonic development.</text>
</comment>
<comment type="similarity">
    <text evidence="5">Belongs to the protein kinase superfamily. CAMK Ser/Thr protein kinase family. Smok subfamily.</text>
</comment>
<keyword id="KW-0067">ATP-binding</keyword>
<keyword id="KW-0418">Kinase</keyword>
<keyword id="KW-0547">Nucleotide-binding</keyword>
<keyword id="KW-1185">Reference proteome</keyword>
<keyword id="KW-0723">Serine/threonine-protein kinase</keyword>
<keyword id="KW-0808">Transferase</keyword>
<protein>
    <recommendedName>
        <fullName>Sperm motility kinase 2A</fullName>
        <ecNumber>2.7.11.1</ecNumber>
    </recommendedName>
</protein>
<feature type="chain" id="PRO_0000307869" description="Sperm motility kinase 2A">
    <location>
        <begin position="1"/>
        <end position="504"/>
    </location>
</feature>
<feature type="domain" description="Protein kinase" evidence="1">
    <location>
        <begin position="28"/>
        <end position="276"/>
    </location>
</feature>
<feature type="domain" description="UBA">
    <location>
        <begin position="294"/>
        <end position="334"/>
    </location>
</feature>
<feature type="region of interest" description="Disordered" evidence="3">
    <location>
        <begin position="376"/>
        <end position="403"/>
    </location>
</feature>
<feature type="region of interest" description="Disordered" evidence="3">
    <location>
        <begin position="443"/>
        <end position="469"/>
    </location>
</feature>
<feature type="compositionally biased region" description="Polar residues" evidence="3">
    <location>
        <begin position="376"/>
        <end position="393"/>
    </location>
</feature>
<feature type="compositionally biased region" description="Polar residues" evidence="3">
    <location>
        <begin position="443"/>
        <end position="454"/>
    </location>
</feature>
<feature type="active site" description="Proton acceptor" evidence="1 2">
    <location>
        <position position="147"/>
    </location>
</feature>
<feature type="binding site" evidence="1">
    <location>
        <begin position="34"/>
        <end position="42"/>
    </location>
    <ligand>
        <name>ATP</name>
        <dbReference type="ChEBI" id="CHEBI:30616"/>
    </ligand>
</feature>
<feature type="binding site" evidence="1">
    <location>
        <position position="57"/>
    </location>
    <ligand>
        <name>ATP</name>
        <dbReference type="ChEBI" id="CHEBI:30616"/>
    </ligand>
</feature>
<reference key="1">
    <citation type="journal article" date="1999" name="Nature">
        <title>A protein kinase encoded by the t complex responder gene causes non-Mendelian inheritance.</title>
        <authorList>
            <person name="Herrmann B.G."/>
            <person name="Koschorz B."/>
            <person name="Wertz K."/>
            <person name="McLaughlin K.J."/>
            <person name="Kispert A."/>
        </authorList>
    </citation>
    <scope>NUCLEOTIDE SEQUENCE [GENOMIC DNA]</scope>
    <scope>TISSUE SPECIFICITY</scope>
    <scope>FUNCTION</scope>
    <source>
        <strain>BALB/cJ</strain>
        <tissue>Testis</tissue>
    </source>
</reference>